<gene>
    <name type="primary">SPS3</name>
    <name type="synonym">SPSB</name>
    <name type="ordered locus">At1g04920</name>
    <name type="ORF">F13M7.9</name>
</gene>
<reference key="1">
    <citation type="journal article" date="2000" name="Nature">
        <title>Sequence and analysis of chromosome 1 of the plant Arabidopsis thaliana.</title>
        <authorList>
            <person name="Theologis A."/>
            <person name="Ecker J.R."/>
            <person name="Palm C.J."/>
            <person name="Federspiel N.A."/>
            <person name="Kaul S."/>
            <person name="White O."/>
            <person name="Alonso J."/>
            <person name="Altafi H."/>
            <person name="Araujo R."/>
            <person name="Bowman C.L."/>
            <person name="Brooks S.Y."/>
            <person name="Buehler E."/>
            <person name="Chan A."/>
            <person name="Chao Q."/>
            <person name="Chen H."/>
            <person name="Cheuk R.F."/>
            <person name="Chin C.W."/>
            <person name="Chung M.K."/>
            <person name="Conn L."/>
            <person name="Conway A.B."/>
            <person name="Conway A.R."/>
            <person name="Creasy T.H."/>
            <person name="Dewar K."/>
            <person name="Dunn P."/>
            <person name="Etgu P."/>
            <person name="Feldblyum T.V."/>
            <person name="Feng J.-D."/>
            <person name="Fong B."/>
            <person name="Fujii C.Y."/>
            <person name="Gill J.E."/>
            <person name="Goldsmith A.D."/>
            <person name="Haas B."/>
            <person name="Hansen N.F."/>
            <person name="Hughes B."/>
            <person name="Huizar L."/>
            <person name="Hunter J.L."/>
            <person name="Jenkins J."/>
            <person name="Johnson-Hopson C."/>
            <person name="Khan S."/>
            <person name="Khaykin E."/>
            <person name="Kim C.J."/>
            <person name="Koo H.L."/>
            <person name="Kremenetskaia I."/>
            <person name="Kurtz D.B."/>
            <person name="Kwan A."/>
            <person name="Lam B."/>
            <person name="Langin-Hooper S."/>
            <person name="Lee A."/>
            <person name="Lee J.M."/>
            <person name="Lenz C.A."/>
            <person name="Li J.H."/>
            <person name="Li Y.-P."/>
            <person name="Lin X."/>
            <person name="Liu S.X."/>
            <person name="Liu Z.A."/>
            <person name="Luros J.S."/>
            <person name="Maiti R."/>
            <person name="Marziali A."/>
            <person name="Militscher J."/>
            <person name="Miranda M."/>
            <person name="Nguyen M."/>
            <person name="Nierman W.C."/>
            <person name="Osborne B.I."/>
            <person name="Pai G."/>
            <person name="Peterson J."/>
            <person name="Pham P.K."/>
            <person name="Rizzo M."/>
            <person name="Rooney T."/>
            <person name="Rowley D."/>
            <person name="Sakano H."/>
            <person name="Salzberg S.L."/>
            <person name="Schwartz J.R."/>
            <person name="Shinn P."/>
            <person name="Southwick A.M."/>
            <person name="Sun H."/>
            <person name="Tallon L.J."/>
            <person name="Tambunga G."/>
            <person name="Toriumi M.J."/>
            <person name="Town C.D."/>
            <person name="Utterback T."/>
            <person name="Van Aken S."/>
            <person name="Vaysberg M."/>
            <person name="Vysotskaia V.S."/>
            <person name="Walker M."/>
            <person name="Wu D."/>
            <person name="Yu G."/>
            <person name="Fraser C.M."/>
            <person name="Venter J.C."/>
            <person name="Davis R.W."/>
        </authorList>
    </citation>
    <scope>NUCLEOTIDE SEQUENCE [LARGE SCALE GENOMIC DNA]</scope>
    <source>
        <strain>cv. Columbia</strain>
    </source>
</reference>
<reference key="2">
    <citation type="journal article" date="2017" name="Plant J.">
        <title>Araport11: a complete reannotation of the Arabidopsis thaliana reference genome.</title>
        <authorList>
            <person name="Cheng C.Y."/>
            <person name="Krishnakumar V."/>
            <person name="Chan A.P."/>
            <person name="Thibaud-Nissen F."/>
            <person name="Schobel S."/>
            <person name="Town C.D."/>
        </authorList>
    </citation>
    <scope>GENOME REANNOTATION</scope>
    <source>
        <strain>cv. Columbia</strain>
    </source>
</reference>
<reference key="3">
    <citation type="journal article" date="2003" name="Science">
        <title>Empirical analysis of transcriptional activity in the Arabidopsis genome.</title>
        <authorList>
            <person name="Yamada K."/>
            <person name="Lim J."/>
            <person name="Dale J.M."/>
            <person name="Chen H."/>
            <person name="Shinn P."/>
            <person name="Palm C.J."/>
            <person name="Southwick A.M."/>
            <person name="Wu H.C."/>
            <person name="Kim C.J."/>
            <person name="Nguyen M."/>
            <person name="Pham P.K."/>
            <person name="Cheuk R.F."/>
            <person name="Karlin-Newmann G."/>
            <person name="Liu S.X."/>
            <person name="Lam B."/>
            <person name="Sakano H."/>
            <person name="Wu T."/>
            <person name="Yu G."/>
            <person name="Miranda M."/>
            <person name="Quach H.L."/>
            <person name="Tripp M."/>
            <person name="Chang C.H."/>
            <person name="Lee J.M."/>
            <person name="Toriumi M.J."/>
            <person name="Chan M.M."/>
            <person name="Tang C.C."/>
            <person name="Onodera C.S."/>
            <person name="Deng J.M."/>
            <person name="Akiyama K."/>
            <person name="Ansari Y."/>
            <person name="Arakawa T."/>
            <person name="Banh J."/>
            <person name="Banno F."/>
            <person name="Bowser L."/>
            <person name="Brooks S.Y."/>
            <person name="Carninci P."/>
            <person name="Chao Q."/>
            <person name="Choy N."/>
            <person name="Enju A."/>
            <person name="Goldsmith A.D."/>
            <person name="Gurjal M."/>
            <person name="Hansen N.F."/>
            <person name="Hayashizaki Y."/>
            <person name="Johnson-Hopson C."/>
            <person name="Hsuan V.W."/>
            <person name="Iida K."/>
            <person name="Karnes M."/>
            <person name="Khan S."/>
            <person name="Koesema E."/>
            <person name="Ishida J."/>
            <person name="Jiang P.X."/>
            <person name="Jones T."/>
            <person name="Kawai J."/>
            <person name="Kamiya A."/>
            <person name="Meyers C."/>
            <person name="Nakajima M."/>
            <person name="Narusaka M."/>
            <person name="Seki M."/>
            <person name="Sakurai T."/>
            <person name="Satou M."/>
            <person name="Tamse R."/>
            <person name="Vaysberg M."/>
            <person name="Wallender E.K."/>
            <person name="Wong C."/>
            <person name="Yamamura Y."/>
            <person name="Yuan S."/>
            <person name="Shinozaki K."/>
            <person name="Davis R.W."/>
            <person name="Theologis A."/>
            <person name="Ecker J.R."/>
        </authorList>
    </citation>
    <scope>NUCLEOTIDE SEQUENCE [LARGE SCALE MRNA]</scope>
    <source>
        <strain>cv. Columbia</strain>
    </source>
</reference>
<reference key="4">
    <citation type="journal article" date="2007" name="J. Plant Physiol.">
        <title>Phylogenetic and expression analysis of sucrose phosphate synthase isozymes in plants.</title>
        <authorList>
            <person name="Lutfiyya L.L."/>
            <person name="Xu N."/>
            <person name="D'Ordine R.L."/>
            <person name="Morrell J.A."/>
            <person name="Miller P.W."/>
            <person name="Duff S.M."/>
        </authorList>
    </citation>
    <scope>GENE FAMILY</scope>
</reference>
<keyword id="KW-0328">Glycosyltransferase</keyword>
<keyword id="KW-0597">Phosphoprotein</keyword>
<keyword id="KW-1185">Reference proteome</keyword>
<keyword id="KW-0808">Transferase</keyword>
<feature type="chain" id="PRO_0000413639" description="Probable sucrose-phosphate synthase 3">
    <location>
        <begin position="1"/>
        <end position="1062"/>
    </location>
</feature>
<feature type="region of interest" description="Disordered" evidence="4">
    <location>
        <begin position="113"/>
        <end position="141"/>
    </location>
</feature>
<feature type="region of interest" description="Disordered" evidence="4">
    <location>
        <begin position="715"/>
        <end position="735"/>
    </location>
</feature>
<feature type="compositionally biased region" description="Basic and acidic residues" evidence="4">
    <location>
        <begin position="113"/>
        <end position="122"/>
    </location>
</feature>
<feature type="modified residue" description="Phosphoserine" evidence="3">
    <location>
        <position position="126"/>
    </location>
</feature>
<feature type="modified residue" description="Phosphoserine" evidence="2">
    <location>
        <position position="130"/>
    </location>
</feature>
<feature type="modified residue" description="Phosphoserine" evidence="2">
    <location>
        <position position="156"/>
    </location>
</feature>
<comment type="function">
    <text>Plays a role in photosynthetic sucrose synthesis by catalyzing the rate-limiting step of sucrose biosynthesis from UDP-glucose and fructose- 6-phosphate. Involved in the regulation of carbon partitioning in the leaves of plants. May regulate the synthesis of sucrose and therefore play a major role as a limiting factor in the export of photoassimilates out of the leaf. Plays a role for sucrose availability that is essential for plant growth and fiber elongation.</text>
</comment>
<comment type="catalytic activity">
    <reaction>
        <text>beta-D-fructose 6-phosphate + UDP-alpha-D-glucose = sucrose 6(F)-phosphate + UDP + H(+)</text>
        <dbReference type="Rhea" id="RHEA:22172"/>
        <dbReference type="ChEBI" id="CHEBI:15378"/>
        <dbReference type="ChEBI" id="CHEBI:57634"/>
        <dbReference type="ChEBI" id="CHEBI:57723"/>
        <dbReference type="ChEBI" id="CHEBI:58223"/>
        <dbReference type="ChEBI" id="CHEBI:58885"/>
        <dbReference type="EC" id="2.4.1.14"/>
    </reaction>
</comment>
<comment type="activity regulation">
    <text evidence="1">Activity is regulated by phosphorylation and moderated by concentration of metabolites and light.</text>
</comment>
<comment type="pathway">
    <text>Glycan biosynthesis; sucrose biosynthesis; sucrose from D-fructose 6-phosphate and UDP-alpha-D-glucose: step 1/2.</text>
</comment>
<comment type="subunit">
    <text evidence="1">Homodimer or homotetramer.</text>
</comment>
<comment type="similarity">
    <text evidence="5">Belongs to the glycosyltransferase 1 family.</text>
</comment>
<comment type="sequence caution" evidence="5">
    <conflict type="erroneous gene model prediction">
        <sequence resource="EMBL-CDS" id="AAF40445"/>
    </conflict>
</comment>
<sequence>MAGNEWINGYLEAILDSQAQGIEETQQKPQASVNLREGDGQYFNPTKYFVEEVVTGVDETDLHRTWLKVVATRNSRERNSRLENMCWRIWHLTRKKKQLEWEDSQRIANRRLEREQGRRDATEDLSEDLSEGEKGDGLGEIVQPETPRRQLQRNLSNLEIWSDDKKENRLYVVLISLHGLVRGENMELGSDSDTGGQVKYVVELARALARMPGVYRVDLFTRQICSSEVDWSYAEPTEMLTTAEDCDGDETGESSGAYIIRIPFGPRDKYLNKEILWPFVQEFVDGALAHILNMSKVLGEQIGKGKPVWPYVIHGHYADAGDSAALLSGALNVPMVLTGHSLGRNKLEQLLKQGRQSKEDINSTYKIKRRIEAEELSLDAAELVITSTRQEIDEQWGLYDGFDVKLEKVLRARARRGVNCHGRFMPRMAVIPPGMDFTNVEVQEDTPEGDGDLASLVGGTEGSSPKAVPTIWSEVMRFFTNPHKPMILALSRPDPKKNITTLLKAFGECRPLRELANLTLIMGNRDDIDELSSGNASVLTTVLKLIDKYDLYGSVAYPKHHKQSDVPDIYRLAANTKGVFINPALVEPFGLTLIEAAAHGLPMVATKNGGPVDIHRALHNGLLVDPHDQEAIANALLKLVSEKNLWHECRINGWKNIHLFSWPEHCRTYLTRIAACRMRHPQWQTDADEVAAQDDEFSLNDSLKDVQDMSLRLSMDGDKPSLNGSLEPNSADPVKQIMSRMRTPEIKSKPELQGKKQSDNLGSKYPVLRRRERLVVLAVDCYDNEGAPDEKAMVPMIQNIIKAVRSDPQMAKNSGFAISTSMPLDELTRFLKSAKIQVSEFDTLICSSGSEVYYPGGEEGKLLPDPDYSSHIDYRWGMEGLKNTVWKLMNTTAVGGEARNKGSPSLIQEDQASSNSHCVAYMIKDRSKVMRVDDLRQKLRLRGLRCHPMYCRNSTRMQIVPLLASRSQALRYLFVRWRLNVANMYVVVGDRGDTDYEELISGTHKTVIVKGLVTLGSDALLRSTDLRDDIVPSESPFIGFLKVDSPVKEITDIFKQLSKATA</sequence>
<name>SPSA3_ARATH</name>
<proteinExistence type="evidence at transcript level"/>
<protein>
    <recommendedName>
        <fullName>Probable sucrose-phosphate synthase 3</fullName>
        <ecNumber>2.4.1.14</ecNumber>
    </recommendedName>
    <alternativeName>
        <fullName>Sucrose phosphate synthase 3F</fullName>
        <shortName>AtSPS3F</shortName>
    </alternativeName>
    <alternativeName>
        <fullName>UDP-glucose-fructose-phosphate glucosyltransferase</fullName>
    </alternativeName>
</protein>
<evidence type="ECO:0000250" key="1"/>
<evidence type="ECO:0000250" key="2">
    <source>
        <dbReference type="UniProtKB" id="F4JLK2"/>
    </source>
</evidence>
<evidence type="ECO:0000250" key="3">
    <source>
        <dbReference type="UniProtKB" id="Q94BT0"/>
    </source>
</evidence>
<evidence type="ECO:0000256" key="4">
    <source>
        <dbReference type="SAM" id="MobiDB-lite"/>
    </source>
</evidence>
<evidence type="ECO:0000305" key="5"/>
<dbReference type="EC" id="2.4.1.14"/>
<dbReference type="EMBL" id="AC004809">
    <property type="protein sequence ID" value="AAF40445.1"/>
    <property type="status" value="ALT_SEQ"/>
    <property type="molecule type" value="Genomic_DNA"/>
</dbReference>
<dbReference type="EMBL" id="CP002684">
    <property type="protein sequence ID" value="AEE27759.1"/>
    <property type="molecule type" value="Genomic_DNA"/>
</dbReference>
<dbReference type="EMBL" id="AY078949">
    <property type="protein sequence ID" value="AAL84949.1"/>
    <property type="molecule type" value="mRNA"/>
</dbReference>
<dbReference type="EMBL" id="BT002210">
    <property type="protein sequence ID" value="AAN72222.1"/>
    <property type="molecule type" value="mRNA"/>
</dbReference>
<dbReference type="PIR" id="F86182">
    <property type="entry name" value="F86182"/>
</dbReference>
<dbReference type="RefSeq" id="NP_171984.2">
    <property type="nucleotide sequence ID" value="NM_100370.3"/>
</dbReference>
<dbReference type="SMR" id="Q8RY24"/>
<dbReference type="FunCoup" id="Q8RY24">
    <property type="interactions" value="184"/>
</dbReference>
<dbReference type="STRING" id="3702.Q8RY24"/>
<dbReference type="CAZy" id="GT4">
    <property type="family name" value="Glycosyltransferase Family 4"/>
</dbReference>
<dbReference type="iPTMnet" id="Q8RY24"/>
<dbReference type="PaxDb" id="3702-AT1G04920.1"/>
<dbReference type="ProteomicsDB" id="232488"/>
<dbReference type="EnsemblPlants" id="AT1G04920.1">
    <property type="protein sequence ID" value="AT1G04920.1"/>
    <property type="gene ID" value="AT1G04920"/>
</dbReference>
<dbReference type="GeneID" id="839382"/>
<dbReference type="Gramene" id="AT1G04920.1">
    <property type="protein sequence ID" value="AT1G04920.1"/>
    <property type="gene ID" value="AT1G04920"/>
</dbReference>
<dbReference type="KEGG" id="ath:AT1G04920"/>
<dbReference type="Araport" id="AT1G04920"/>
<dbReference type="TAIR" id="AT1G04920">
    <property type="gene designation" value="SPS3F"/>
</dbReference>
<dbReference type="eggNOG" id="KOG0853">
    <property type="taxonomic scope" value="Eukaryota"/>
</dbReference>
<dbReference type="HOGENOM" id="CLU_009583_24_0_1"/>
<dbReference type="InParanoid" id="Q8RY24"/>
<dbReference type="OMA" id="TRMQIVP"/>
<dbReference type="OrthoDB" id="512920at2759"/>
<dbReference type="PhylomeDB" id="Q8RY24"/>
<dbReference type="BRENDA" id="2.4.1.14">
    <property type="organism ID" value="399"/>
</dbReference>
<dbReference type="UniPathway" id="UPA00371">
    <property type="reaction ID" value="UER00545"/>
</dbReference>
<dbReference type="PRO" id="PR:Q8RY24"/>
<dbReference type="Proteomes" id="UP000006548">
    <property type="component" value="Chromosome 1"/>
</dbReference>
<dbReference type="ExpressionAtlas" id="Q8RY24">
    <property type="expression patterns" value="baseline and differential"/>
</dbReference>
<dbReference type="GO" id="GO:0005794">
    <property type="term" value="C:Golgi apparatus"/>
    <property type="evidence" value="ECO:0000314"/>
    <property type="project" value="TAIR"/>
</dbReference>
<dbReference type="GO" id="GO:0046524">
    <property type="term" value="F:sucrose-phosphate synthase activity"/>
    <property type="evidence" value="ECO:0000314"/>
    <property type="project" value="TAIR"/>
</dbReference>
<dbReference type="GO" id="GO:0005986">
    <property type="term" value="P:sucrose biosynthetic process"/>
    <property type="evidence" value="ECO:0007669"/>
    <property type="project" value="UniProtKB-UniPathway"/>
</dbReference>
<dbReference type="CDD" id="cd03800">
    <property type="entry name" value="GT4_sucrose_synthase"/>
    <property type="match status" value="1"/>
</dbReference>
<dbReference type="CDD" id="cd16419">
    <property type="entry name" value="HAD_SPS"/>
    <property type="match status" value="1"/>
</dbReference>
<dbReference type="FunFam" id="3.40.50.2000:FF:000112">
    <property type="entry name" value="Sucrose-phosphate synthase 1"/>
    <property type="match status" value="1"/>
</dbReference>
<dbReference type="FunFam" id="3.40.50.2000:FF:000077">
    <property type="entry name" value="Sucrose-phosphate synthase 2"/>
    <property type="match status" value="1"/>
</dbReference>
<dbReference type="Gene3D" id="3.40.50.2000">
    <property type="entry name" value="Glycogen Phosphorylase B"/>
    <property type="match status" value="2"/>
</dbReference>
<dbReference type="InterPro" id="IPR001296">
    <property type="entry name" value="Glyco_trans_1"/>
</dbReference>
<dbReference type="InterPro" id="IPR006380">
    <property type="entry name" value="SPP-like_dom"/>
</dbReference>
<dbReference type="InterPro" id="IPR044161">
    <property type="entry name" value="SPS"/>
</dbReference>
<dbReference type="InterPro" id="IPR035659">
    <property type="entry name" value="SPS_C"/>
</dbReference>
<dbReference type="InterPro" id="IPR012819">
    <property type="entry name" value="SPS_pln"/>
</dbReference>
<dbReference type="InterPro" id="IPR000368">
    <property type="entry name" value="Sucrose_synth_GT-B1"/>
</dbReference>
<dbReference type="NCBIfam" id="TIGR02468">
    <property type="entry name" value="sucrsPsyn_pln"/>
    <property type="match status" value="1"/>
</dbReference>
<dbReference type="PANTHER" id="PTHR46039">
    <property type="entry name" value="SUCROSE-PHOSPHATE SYNTHASE 3-RELATED"/>
    <property type="match status" value="1"/>
</dbReference>
<dbReference type="PANTHER" id="PTHR46039:SF5">
    <property type="entry name" value="SUCROSE-PHOSPHATE SYNTHASE 3-RELATED"/>
    <property type="match status" value="1"/>
</dbReference>
<dbReference type="Pfam" id="PF00534">
    <property type="entry name" value="Glycos_transf_1"/>
    <property type="match status" value="1"/>
</dbReference>
<dbReference type="Pfam" id="PF00862">
    <property type="entry name" value="GT-B_Sucrose_synth"/>
    <property type="match status" value="1"/>
</dbReference>
<dbReference type="Pfam" id="PF05116">
    <property type="entry name" value="S6PP"/>
    <property type="match status" value="1"/>
</dbReference>
<dbReference type="SUPFAM" id="SSF53756">
    <property type="entry name" value="UDP-Glycosyltransferase/glycogen phosphorylase"/>
    <property type="match status" value="1"/>
</dbReference>
<accession>Q8RY24</accession>
<accession>Q9MAU0</accession>
<organism>
    <name type="scientific">Arabidopsis thaliana</name>
    <name type="common">Mouse-ear cress</name>
    <dbReference type="NCBI Taxonomy" id="3702"/>
    <lineage>
        <taxon>Eukaryota</taxon>
        <taxon>Viridiplantae</taxon>
        <taxon>Streptophyta</taxon>
        <taxon>Embryophyta</taxon>
        <taxon>Tracheophyta</taxon>
        <taxon>Spermatophyta</taxon>
        <taxon>Magnoliopsida</taxon>
        <taxon>eudicotyledons</taxon>
        <taxon>Gunneridae</taxon>
        <taxon>Pentapetalae</taxon>
        <taxon>rosids</taxon>
        <taxon>malvids</taxon>
        <taxon>Brassicales</taxon>
        <taxon>Brassicaceae</taxon>
        <taxon>Camelineae</taxon>
        <taxon>Arabidopsis</taxon>
    </lineage>
</organism>